<organism evidence="11">
    <name type="scientific">Sordaria macrospora (strain ATCC MYA-333 / DSM 997 / K(L3346) / K-hell)</name>
    <dbReference type="NCBI Taxonomy" id="771870"/>
    <lineage>
        <taxon>Eukaryota</taxon>
        <taxon>Fungi</taxon>
        <taxon>Dikarya</taxon>
        <taxon>Ascomycota</taxon>
        <taxon>Pezizomycotina</taxon>
        <taxon>Sordariomycetes</taxon>
        <taxon>Sordariomycetidae</taxon>
        <taxon>Sordariales</taxon>
        <taxon>Sordariaceae</taxon>
        <taxon>Sordaria</taxon>
    </lineage>
</organism>
<evidence type="ECO:0000255" key="1"/>
<evidence type="ECO:0000255" key="2">
    <source>
        <dbReference type="HAMAP-Rule" id="MF_03121"/>
    </source>
</evidence>
<evidence type="ECO:0000255" key="3">
    <source>
        <dbReference type="PROSITE-ProRule" id="PRU00499"/>
    </source>
</evidence>
<evidence type="ECO:0000255" key="4">
    <source>
        <dbReference type="PROSITE-ProRule" id="PRU01122"/>
    </source>
</evidence>
<evidence type="ECO:0000255" key="5">
    <source>
        <dbReference type="PROSITE-ProRule" id="PRU01123"/>
    </source>
</evidence>
<evidence type="ECO:0000256" key="6">
    <source>
        <dbReference type="SAM" id="MobiDB-lite"/>
    </source>
</evidence>
<evidence type="ECO:0000269" key="7">
    <source>
    </source>
</evidence>
<evidence type="ECO:0000303" key="8">
    <source>
    </source>
</evidence>
<evidence type="ECO:0000305" key="9"/>
<evidence type="ECO:0000312" key="10">
    <source>
        <dbReference type="EMBL" id="CCC06887.1"/>
    </source>
</evidence>
<evidence type="ECO:0000312" key="11">
    <source>
        <dbReference type="Proteomes" id="UP000001881"/>
    </source>
</evidence>
<reference evidence="11" key="1">
    <citation type="journal article" date="2010" name="PLoS Genet.">
        <title>De novo assembly of a 40 Mb eukaryotic genome from short sequence reads: Sordaria macrospora, a model organism for fungal morphogenesis.</title>
        <authorList>
            <person name="Nowrousian M."/>
            <person name="Stajich J.E."/>
            <person name="Chu M."/>
            <person name="Engh I."/>
            <person name="Espagne E."/>
            <person name="Halliday K."/>
            <person name="Kamerewerd J."/>
            <person name="Kempken F."/>
            <person name="Knab B."/>
            <person name="Kuo H.-C."/>
            <person name="Osiewacz H.D."/>
            <person name="Poeggeler S."/>
            <person name="Read N.D."/>
            <person name="Seiler S."/>
            <person name="Smith K.M."/>
            <person name="Zickler D."/>
            <person name="Kueck U."/>
            <person name="Freitag M."/>
        </authorList>
    </citation>
    <scope>NUCLEOTIDE SEQUENCE [LARGE SCALE GENOMIC DNA]</scope>
    <source>
        <strain>ATCC MYA-333 / DSM 997 / K(L3346) / K-hell</strain>
        <tissue evidence="10">Mycelium</tissue>
    </source>
</reference>
<reference evidence="9" key="2">
    <citation type="journal article" date="2021" name="J. Fungi">
        <title>The Glyoxysomal Protease LON2 Is Involved in Fruiting-Body Development, Ascosporogenesis and Stress Resistance in Sordaria macrospora.</title>
        <authorList>
            <person name="Werner A."/>
            <person name="Otte K."/>
            <person name="Stahlhut G."/>
            <person name="Hanke L.M."/>
            <person name="Poeggeler S."/>
        </authorList>
    </citation>
    <scope>SUBCELLULAR LOCATION</scope>
    <scope>DISRUPTION PHENOTYPE</scope>
    <scope>MUTAGENESIS OF 907-SER--LEU-909</scope>
</reference>
<sequence>MAPVRAPTARHRLVARRRLREGGFQTPNGASIQFPLPAYPWQSPLLGPEGNLLIENGDNKNETSGDVDPAKATKADLFPYGVAAKITGVEGRGTGEFTLLVEGVTRIHVEKVIADKAYLEGKVSSYADPALITDSALEELFMSLKLLSRQFVTILRLSSLLPQSSGTPGLSPLLARRLDFYIAKQKYPGALADFMANIVESTYEEKLQILTLIDVKERVAKVIELLDRQVTNIKNSMKITTITATSLPFPMDPDSTKPGKVKPPVKAPGQGVGMPFPPQGGFMGRGGNPDDEQEPNEIEELQKRLDAARLSPEAAKIADREIKRLKKIHPAQAEYAVTRTYLETLAEIPWTATTDDRLGPDTLNRARKQLDDDHYGLDKVKKRLLEYLAVLRLKQAINDDVDIQIKQIEQELGVGSENGKEDAAQPAAVDLTVDEKVKAGGAKLEALKNRRMVDKSPILLLVGPPGVGKTSLARSVATALGRKFHRISLGGVRDEAEIRGHRRTYVAAMPGLVVQGLKKVGVANPVFLLDEIDKVGGSSIHGDPSAAMLEVLDPEQNHNFTDHYVNIPIDLSKVLFIATANSLDTIPAPLLDRMETIYIPGYTTLEKRHIAMQHLVPKQLRVNGLDESQVSFTPEVVSKIIESYTREAGVRNLEREISSVARGKAVEFADAKDSGHPENYNPQLTVDDLEKFLGIEKFEEEIAEKTSRPGIVTGLVAYSSGGNGSILFIEVADMPGNGSVQLTGKLGDVLKESVEVALTWVKAHAYELGLTQSPNENIMKDRSIHVHCPSGAVPKDGPSSGISQAIALISLFSGKAVPSTMAMTGEISLRGRITAVGGIKEKLIGALRAGVKTVLLPAQNRKDVKDLPQEVKDGLEIIHVSHIWEAIRYVWPDGQWPSEHDYPSVESRL</sequence>
<accession>F7VNF8</accession>
<keyword id="KW-0067">ATP-binding</keyword>
<keyword id="KW-0963">Cytoplasm</keyword>
<keyword id="KW-0378">Hydrolase</keyword>
<keyword id="KW-0547">Nucleotide-binding</keyword>
<keyword id="KW-0576">Peroxisome</keyword>
<keyword id="KW-0645">Protease</keyword>
<keyword id="KW-1185">Reference proteome</keyword>
<keyword id="KW-0720">Serine protease</keyword>
<dbReference type="EC" id="3.4.21.53" evidence="2"/>
<dbReference type="EMBL" id="CABT02000002">
    <property type="protein sequence ID" value="CCC06887.1"/>
    <property type="molecule type" value="Genomic_DNA"/>
</dbReference>
<dbReference type="RefSeq" id="XP_003350023.1">
    <property type="nucleotide sequence ID" value="XM_003349975.1"/>
</dbReference>
<dbReference type="SMR" id="F7VNF8"/>
<dbReference type="STRING" id="771870.F7VNF8"/>
<dbReference type="VEuPathDB" id="FungiDB:SMAC_00912"/>
<dbReference type="eggNOG" id="KOG2004">
    <property type="taxonomic scope" value="Eukaryota"/>
</dbReference>
<dbReference type="HOGENOM" id="CLU_004109_4_0_1"/>
<dbReference type="InParanoid" id="F7VNF8"/>
<dbReference type="OMA" id="MPMNQEY"/>
<dbReference type="OrthoDB" id="2411602at2759"/>
<dbReference type="Proteomes" id="UP000001881">
    <property type="component" value="Unassembled WGS sequence"/>
</dbReference>
<dbReference type="GO" id="GO:0005782">
    <property type="term" value="C:peroxisomal matrix"/>
    <property type="evidence" value="ECO:0007669"/>
    <property type="project" value="UniProtKB-SubCell"/>
</dbReference>
<dbReference type="GO" id="GO:0005524">
    <property type="term" value="F:ATP binding"/>
    <property type="evidence" value="ECO:0007669"/>
    <property type="project" value="UniProtKB-UniRule"/>
</dbReference>
<dbReference type="GO" id="GO:0016887">
    <property type="term" value="F:ATP hydrolysis activity"/>
    <property type="evidence" value="ECO:0007669"/>
    <property type="project" value="UniProtKB-UniRule"/>
</dbReference>
<dbReference type="GO" id="GO:0004176">
    <property type="term" value="F:ATP-dependent peptidase activity"/>
    <property type="evidence" value="ECO:0007669"/>
    <property type="project" value="UniProtKB-UniRule"/>
</dbReference>
<dbReference type="GO" id="GO:0004252">
    <property type="term" value="F:serine-type endopeptidase activity"/>
    <property type="evidence" value="ECO:0007669"/>
    <property type="project" value="UniProtKB-UniRule"/>
</dbReference>
<dbReference type="GO" id="GO:0016558">
    <property type="term" value="P:protein import into peroxisome matrix"/>
    <property type="evidence" value="ECO:0007669"/>
    <property type="project" value="UniProtKB-UniRule"/>
</dbReference>
<dbReference type="GO" id="GO:0016485">
    <property type="term" value="P:protein processing"/>
    <property type="evidence" value="ECO:0007669"/>
    <property type="project" value="UniProtKB-UniRule"/>
</dbReference>
<dbReference type="GO" id="GO:0006515">
    <property type="term" value="P:protein quality control for misfolded or incompletely synthesized proteins"/>
    <property type="evidence" value="ECO:0007669"/>
    <property type="project" value="UniProtKB-UniRule"/>
</dbReference>
<dbReference type="CDD" id="cd19500">
    <property type="entry name" value="RecA-like_Lon"/>
    <property type="match status" value="1"/>
</dbReference>
<dbReference type="FunFam" id="1.20.5.5270:FF:000002">
    <property type="entry name" value="Lon protease homolog"/>
    <property type="match status" value="1"/>
</dbReference>
<dbReference type="FunFam" id="1.10.8.60:FF:000091">
    <property type="entry name" value="Lon protease homolog 2, peroxisomal"/>
    <property type="match status" value="1"/>
</dbReference>
<dbReference type="FunFam" id="1.20.58.1480:FF:000011">
    <property type="entry name" value="Lon protease homolog 2, peroxisomal"/>
    <property type="match status" value="1"/>
</dbReference>
<dbReference type="FunFam" id="3.30.230.10:FF:000039">
    <property type="entry name" value="Lon protease homolog 2, peroxisomal"/>
    <property type="match status" value="1"/>
</dbReference>
<dbReference type="Gene3D" id="1.10.8.60">
    <property type="match status" value="1"/>
</dbReference>
<dbReference type="Gene3D" id="1.20.5.5270">
    <property type="match status" value="1"/>
</dbReference>
<dbReference type="Gene3D" id="1.20.58.1480">
    <property type="match status" value="1"/>
</dbReference>
<dbReference type="Gene3D" id="3.30.230.10">
    <property type="match status" value="1"/>
</dbReference>
<dbReference type="Gene3D" id="2.30.130.40">
    <property type="entry name" value="LON domain-like"/>
    <property type="match status" value="1"/>
</dbReference>
<dbReference type="Gene3D" id="3.40.50.300">
    <property type="entry name" value="P-loop containing nucleotide triphosphate hydrolases"/>
    <property type="match status" value="1"/>
</dbReference>
<dbReference type="HAMAP" id="MF_03121">
    <property type="entry name" value="lonp2_euk"/>
    <property type="match status" value="1"/>
</dbReference>
<dbReference type="InterPro" id="IPR003593">
    <property type="entry name" value="AAA+_ATPase"/>
</dbReference>
<dbReference type="InterPro" id="IPR003959">
    <property type="entry name" value="ATPase_AAA_core"/>
</dbReference>
<dbReference type="InterPro" id="IPR004815">
    <property type="entry name" value="Lon_bac/euk-typ"/>
</dbReference>
<dbReference type="InterPro" id="IPR054594">
    <property type="entry name" value="Lon_lid"/>
</dbReference>
<dbReference type="InterPro" id="IPR008269">
    <property type="entry name" value="Lon_proteolytic"/>
</dbReference>
<dbReference type="InterPro" id="IPR027065">
    <property type="entry name" value="Lon_Prtase"/>
</dbReference>
<dbReference type="InterPro" id="IPR003111">
    <property type="entry name" value="Lon_prtase_N"/>
</dbReference>
<dbReference type="InterPro" id="IPR046336">
    <property type="entry name" value="Lon_prtase_N_sf"/>
</dbReference>
<dbReference type="InterPro" id="IPR027501">
    <property type="entry name" value="Lonp2_euk"/>
</dbReference>
<dbReference type="InterPro" id="IPR027417">
    <property type="entry name" value="P-loop_NTPase"/>
</dbReference>
<dbReference type="InterPro" id="IPR015947">
    <property type="entry name" value="PUA-like_sf"/>
</dbReference>
<dbReference type="InterPro" id="IPR020568">
    <property type="entry name" value="Ribosomal_Su5_D2-typ_SF"/>
</dbReference>
<dbReference type="InterPro" id="IPR014721">
    <property type="entry name" value="Ribsml_uS5_D2-typ_fold_subgr"/>
</dbReference>
<dbReference type="NCBIfam" id="TIGR00763">
    <property type="entry name" value="lon"/>
    <property type="match status" value="1"/>
</dbReference>
<dbReference type="PANTHER" id="PTHR10046">
    <property type="entry name" value="ATP DEPENDENT LON PROTEASE FAMILY MEMBER"/>
    <property type="match status" value="1"/>
</dbReference>
<dbReference type="Pfam" id="PF00004">
    <property type="entry name" value="AAA"/>
    <property type="match status" value="1"/>
</dbReference>
<dbReference type="Pfam" id="PF05362">
    <property type="entry name" value="Lon_C"/>
    <property type="match status" value="1"/>
</dbReference>
<dbReference type="Pfam" id="PF22667">
    <property type="entry name" value="Lon_lid"/>
    <property type="match status" value="1"/>
</dbReference>
<dbReference type="Pfam" id="PF02190">
    <property type="entry name" value="LON_substr_bdg"/>
    <property type="match status" value="1"/>
</dbReference>
<dbReference type="PIRSF" id="PIRSF001174">
    <property type="entry name" value="Lon_proteas"/>
    <property type="match status" value="1"/>
</dbReference>
<dbReference type="PRINTS" id="PR00830">
    <property type="entry name" value="ENDOLAPTASE"/>
</dbReference>
<dbReference type="SMART" id="SM00382">
    <property type="entry name" value="AAA"/>
    <property type="match status" value="1"/>
</dbReference>
<dbReference type="SMART" id="SM00464">
    <property type="entry name" value="LON"/>
    <property type="match status" value="1"/>
</dbReference>
<dbReference type="SUPFAM" id="SSF52540">
    <property type="entry name" value="P-loop containing nucleoside triphosphate hydrolases"/>
    <property type="match status" value="1"/>
</dbReference>
<dbReference type="SUPFAM" id="SSF88697">
    <property type="entry name" value="PUA domain-like"/>
    <property type="match status" value="1"/>
</dbReference>
<dbReference type="SUPFAM" id="SSF54211">
    <property type="entry name" value="Ribosomal protein S5 domain 2-like"/>
    <property type="match status" value="1"/>
</dbReference>
<dbReference type="PROSITE" id="PS51787">
    <property type="entry name" value="LON_N"/>
    <property type="match status" value="1"/>
</dbReference>
<dbReference type="PROSITE" id="PS51786">
    <property type="entry name" value="LON_PROTEOLYTIC"/>
    <property type="match status" value="1"/>
</dbReference>
<comment type="function">
    <text evidence="2">ATP-dependent serine protease that mediates the selective degradation of misfolded and unassembled polypeptides in the peroxisomal matrix. Necessary for type 2 peroxisome targeting signal (PTS2)-containing protein processing and facilitates peroxisome matrix protein import.</text>
</comment>
<comment type="catalytic activity">
    <reaction evidence="2">
        <text>Hydrolysis of proteins in presence of ATP.</text>
        <dbReference type="EC" id="3.4.21.53"/>
    </reaction>
</comment>
<comment type="subcellular location">
    <subcellularLocation>
        <location evidence="2 7">Peroxisome matrix</location>
    </subcellularLocation>
    <subcellularLocation>
        <location evidence="7">Cytoplasm</location>
    </subcellularLocation>
    <text evidence="7">Localizes to peroxisomes of hyphal tips and subapical hyphal compartments (PubMed:33530609). Also localizes to non-peroxisomal structures in the cytoplasm (PubMed:33530609).</text>
</comment>
<comment type="disruption phenotype">
    <text evidence="7">Increases pexophagy (PubMed:33530609). Sensitive to hydrogen peroxide, and histidine starvation (induced by amitrole) (PubMed:33530609). Abnormal sexual development; decreases the number of perithecia produced and enhances the growth of aerial mycelium, the amount of mature spores formed is decreased (PubMed:33530609).</text>
</comment>
<comment type="similarity">
    <text evidence="9">Belongs to the peptidase S16 family.</text>
</comment>
<gene>
    <name evidence="8" type="primary">LON2</name>
    <name evidence="10" type="ORF">SMAC_00912</name>
</gene>
<protein>
    <recommendedName>
        <fullName evidence="2">Lon protease homolog 2, peroxisomal</fullName>
        <ecNumber evidence="2">3.4.21.53</ecNumber>
    </recommendedName>
    <alternativeName>
        <fullName evidence="8">SmLON2</fullName>
    </alternativeName>
</protein>
<feature type="chain" id="PRO_0000456801" description="Lon protease homolog 2, peroxisomal" evidence="1">
    <location>
        <begin position="1"/>
        <end position="909"/>
    </location>
</feature>
<feature type="domain" description="Lon N-terminal" evidence="5">
    <location>
        <begin position="1"/>
        <end position="230"/>
    </location>
</feature>
<feature type="domain" description="Lon proteolytic" evidence="4">
    <location>
        <begin position="706"/>
        <end position="893"/>
    </location>
</feature>
<feature type="region of interest" description="Disordered" evidence="6">
    <location>
        <begin position="249"/>
        <end position="269"/>
    </location>
</feature>
<feature type="short sequence motif" description="Microbody targeting signal" evidence="2">
    <location>
        <begin position="907"/>
        <end position="909"/>
    </location>
</feature>
<feature type="active site" evidence="4">
    <location>
        <position position="799"/>
    </location>
</feature>
<feature type="active site" evidence="4">
    <location>
        <position position="842"/>
    </location>
</feature>
<feature type="binding site" evidence="3">
    <location>
        <begin position="463"/>
        <end position="470"/>
    </location>
    <ligand>
        <name>ATP</name>
        <dbReference type="ChEBI" id="CHEBI:30616"/>
    </ligand>
</feature>
<feature type="mutagenesis site" description="Abolishes localization to peroxisomes with protein distributed evenly throughout the cytoplasm." evidence="7">
    <location>
        <begin position="907"/>
        <end position="909"/>
    </location>
</feature>
<name>LONP2_SORMK</name>
<proteinExistence type="evidence at protein level"/>